<accession>Q7N8L0</accession>
<evidence type="ECO:0000250" key="1"/>
<evidence type="ECO:0000255" key="2">
    <source>
        <dbReference type="HAMAP-Rule" id="MF_00062"/>
    </source>
</evidence>
<evidence type="ECO:0000305" key="3"/>
<gene>
    <name evidence="2" type="primary">cysN</name>
    <name type="ordered locus">plu0710</name>
</gene>
<name>CYSN_PHOLL</name>
<proteinExistence type="inferred from homology"/>
<sequence length="480" mass="53810">MSALAQNETIAHQIKQQGGVEAYLHAQQEKGLLRFLTCGSVDDGKSTLIGRLLHDTRQIYEDQLSTLQNDSKRIGTQGEKLDLALLVDGLAAEREQGITIDVAYRYFSTEKRKFIIADTPGHEQYTRNMATGASTCDLSILLIDARKGVQEQTRRHSFISTLLGIRHLVVAVNKMDLMEYRQEVFNQIKQDYMNFAGQLPTNLDVHFVPISALDGDNIVTISRNMDWYEGPTLLDILETVDVKKEASKQLLRFPVQYVSRPDLDFRGYSGTLSSGILRKGQKVKVMPSGICSQVERIVTFDGDLDFAVPGEAITVVLKDEIDISRGDLLISADDEMMVTRHALVDVVWMSEQPLVQGQNLDIKVAGKKSRGKVENIQYQVDITHLTQRVAVDLPLNAIGSVEFSFEEPLMLDSYQQNSDTGGIILVDRLTNVTVGAGLVREIQTDVYEGPKEFSEFELELNRLIRRHFPHWGARDLLGGK</sequence>
<comment type="function">
    <text evidence="2">With CysD forms the ATP sulfurylase (ATPS) that catalyzes the adenylation of sulfate producing adenosine 5'-phosphosulfate (APS) and diphosphate, the first enzymatic step in sulfur assimilation pathway. APS synthesis involves the formation of a high-energy phosphoric-sulfuric acid anhydride bond driven by GTP hydrolysis by CysN coupled to ATP hydrolysis by CysD.</text>
</comment>
<comment type="catalytic activity">
    <reaction evidence="2">
        <text>sulfate + ATP + H(+) = adenosine 5'-phosphosulfate + diphosphate</text>
        <dbReference type="Rhea" id="RHEA:18133"/>
        <dbReference type="ChEBI" id="CHEBI:15378"/>
        <dbReference type="ChEBI" id="CHEBI:16189"/>
        <dbReference type="ChEBI" id="CHEBI:30616"/>
        <dbReference type="ChEBI" id="CHEBI:33019"/>
        <dbReference type="ChEBI" id="CHEBI:58243"/>
        <dbReference type="EC" id="2.7.7.4"/>
    </reaction>
</comment>
<comment type="pathway">
    <text evidence="2">Sulfur metabolism; hydrogen sulfide biosynthesis; sulfite from sulfate: step 1/3.</text>
</comment>
<comment type="subunit">
    <text evidence="2">Heterodimer composed of CysD, the smaller subunit, and CysN.</text>
</comment>
<comment type="similarity">
    <text evidence="2">Belongs to the TRAFAC class translation factor GTPase superfamily. Classic translation factor GTPase family. CysN/NodQ subfamily.</text>
</comment>
<comment type="sequence caution" evidence="3">
    <conflict type="erroneous initiation">
        <sequence resource="EMBL-CDS" id="CAE13005"/>
    </conflict>
</comment>
<reference key="1">
    <citation type="journal article" date="2003" name="Nat. Biotechnol.">
        <title>The genome sequence of the entomopathogenic bacterium Photorhabdus luminescens.</title>
        <authorList>
            <person name="Duchaud E."/>
            <person name="Rusniok C."/>
            <person name="Frangeul L."/>
            <person name="Buchrieser C."/>
            <person name="Givaudan A."/>
            <person name="Taourit S."/>
            <person name="Bocs S."/>
            <person name="Boursaux-Eude C."/>
            <person name="Chandler M."/>
            <person name="Charles J.-F."/>
            <person name="Dassa E."/>
            <person name="Derose R."/>
            <person name="Derzelle S."/>
            <person name="Freyssinet G."/>
            <person name="Gaudriault S."/>
            <person name="Medigue C."/>
            <person name="Lanois A."/>
            <person name="Powell K."/>
            <person name="Siguier P."/>
            <person name="Vincent R."/>
            <person name="Wingate V."/>
            <person name="Zouine M."/>
            <person name="Glaser P."/>
            <person name="Boemare N."/>
            <person name="Danchin A."/>
            <person name="Kunst F."/>
        </authorList>
    </citation>
    <scope>NUCLEOTIDE SEQUENCE [LARGE SCALE GENOMIC DNA]</scope>
    <source>
        <strain>DSM 15139 / CIP 105565 / TT01</strain>
    </source>
</reference>
<keyword id="KW-0067">ATP-binding</keyword>
<keyword id="KW-0342">GTP-binding</keyword>
<keyword id="KW-0547">Nucleotide-binding</keyword>
<keyword id="KW-0548">Nucleotidyltransferase</keyword>
<keyword id="KW-1185">Reference proteome</keyword>
<keyword id="KW-0808">Transferase</keyword>
<feature type="chain" id="PRO_0000091525" description="Sulfate adenylyltransferase subunit 1">
    <location>
        <begin position="1"/>
        <end position="480"/>
    </location>
</feature>
<feature type="domain" description="tr-type G">
    <location>
        <begin position="30"/>
        <end position="248"/>
    </location>
</feature>
<feature type="region of interest" description="G1" evidence="1">
    <location>
        <begin position="39"/>
        <end position="46"/>
    </location>
</feature>
<feature type="region of interest" description="G2" evidence="1">
    <location>
        <begin position="97"/>
        <end position="101"/>
    </location>
</feature>
<feature type="region of interest" description="G3" evidence="1">
    <location>
        <begin position="118"/>
        <end position="121"/>
    </location>
</feature>
<feature type="region of interest" description="G4" evidence="1">
    <location>
        <begin position="173"/>
        <end position="176"/>
    </location>
</feature>
<feature type="region of interest" description="G5" evidence="1">
    <location>
        <begin position="211"/>
        <end position="213"/>
    </location>
</feature>
<feature type="binding site" evidence="2">
    <location>
        <begin position="39"/>
        <end position="46"/>
    </location>
    <ligand>
        <name>GTP</name>
        <dbReference type="ChEBI" id="CHEBI:37565"/>
    </ligand>
</feature>
<feature type="binding site" evidence="2">
    <location>
        <begin position="118"/>
        <end position="122"/>
    </location>
    <ligand>
        <name>GTP</name>
        <dbReference type="ChEBI" id="CHEBI:37565"/>
    </ligand>
</feature>
<feature type="binding site" evidence="2">
    <location>
        <begin position="173"/>
        <end position="176"/>
    </location>
    <ligand>
        <name>GTP</name>
        <dbReference type="ChEBI" id="CHEBI:37565"/>
    </ligand>
</feature>
<organism>
    <name type="scientific">Photorhabdus laumondii subsp. laumondii (strain DSM 15139 / CIP 105565 / TT01)</name>
    <name type="common">Photorhabdus luminescens subsp. laumondii</name>
    <dbReference type="NCBI Taxonomy" id="243265"/>
    <lineage>
        <taxon>Bacteria</taxon>
        <taxon>Pseudomonadati</taxon>
        <taxon>Pseudomonadota</taxon>
        <taxon>Gammaproteobacteria</taxon>
        <taxon>Enterobacterales</taxon>
        <taxon>Morganellaceae</taxon>
        <taxon>Photorhabdus</taxon>
    </lineage>
</organism>
<dbReference type="EC" id="2.7.7.4" evidence="2"/>
<dbReference type="EMBL" id="BX571861">
    <property type="protein sequence ID" value="CAE13005.1"/>
    <property type="status" value="ALT_INIT"/>
    <property type="molecule type" value="Genomic_DNA"/>
</dbReference>
<dbReference type="RefSeq" id="WP_041379914.1">
    <property type="nucleotide sequence ID" value="NC_005126.1"/>
</dbReference>
<dbReference type="SMR" id="Q7N8L0"/>
<dbReference type="STRING" id="243265.plu0710"/>
<dbReference type="GeneID" id="48847005"/>
<dbReference type="KEGG" id="plu:plu0710"/>
<dbReference type="eggNOG" id="COG2895">
    <property type="taxonomic scope" value="Bacteria"/>
</dbReference>
<dbReference type="HOGENOM" id="CLU_007265_5_2_6"/>
<dbReference type="OrthoDB" id="9804504at2"/>
<dbReference type="UniPathway" id="UPA00140">
    <property type="reaction ID" value="UER00204"/>
</dbReference>
<dbReference type="Proteomes" id="UP000002514">
    <property type="component" value="Chromosome"/>
</dbReference>
<dbReference type="GO" id="GO:0005524">
    <property type="term" value="F:ATP binding"/>
    <property type="evidence" value="ECO:0007669"/>
    <property type="project" value="UniProtKB-KW"/>
</dbReference>
<dbReference type="GO" id="GO:0005525">
    <property type="term" value="F:GTP binding"/>
    <property type="evidence" value="ECO:0007669"/>
    <property type="project" value="UniProtKB-UniRule"/>
</dbReference>
<dbReference type="GO" id="GO:0003924">
    <property type="term" value="F:GTPase activity"/>
    <property type="evidence" value="ECO:0007669"/>
    <property type="project" value="InterPro"/>
</dbReference>
<dbReference type="GO" id="GO:0097216">
    <property type="term" value="F:guanosine tetraphosphate binding"/>
    <property type="evidence" value="ECO:0007669"/>
    <property type="project" value="UniProtKB-ARBA"/>
</dbReference>
<dbReference type="GO" id="GO:0004781">
    <property type="term" value="F:sulfate adenylyltransferase (ATP) activity"/>
    <property type="evidence" value="ECO:0007669"/>
    <property type="project" value="UniProtKB-UniRule"/>
</dbReference>
<dbReference type="GO" id="GO:0070814">
    <property type="term" value="P:hydrogen sulfide biosynthetic process"/>
    <property type="evidence" value="ECO:0007669"/>
    <property type="project" value="UniProtKB-UniRule"/>
</dbReference>
<dbReference type="GO" id="GO:0000103">
    <property type="term" value="P:sulfate assimilation"/>
    <property type="evidence" value="ECO:0007669"/>
    <property type="project" value="UniProtKB-UniRule"/>
</dbReference>
<dbReference type="CDD" id="cd04166">
    <property type="entry name" value="CysN_ATPS"/>
    <property type="match status" value="1"/>
</dbReference>
<dbReference type="CDD" id="cd03695">
    <property type="entry name" value="CysN_NodQ_II"/>
    <property type="match status" value="1"/>
</dbReference>
<dbReference type="CDD" id="cd04095">
    <property type="entry name" value="CysN_NoDQ_III"/>
    <property type="match status" value="1"/>
</dbReference>
<dbReference type="FunFam" id="2.40.30.10:FF:000027">
    <property type="entry name" value="Sulfate adenylyltransferase subunit 1"/>
    <property type="match status" value="1"/>
</dbReference>
<dbReference type="FunFam" id="3.40.50.300:FF:000119">
    <property type="entry name" value="Sulfate adenylyltransferase subunit 1"/>
    <property type="match status" value="1"/>
</dbReference>
<dbReference type="Gene3D" id="3.40.50.300">
    <property type="entry name" value="P-loop containing nucleotide triphosphate hydrolases"/>
    <property type="match status" value="1"/>
</dbReference>
<dbReference type="Gene3D" id="2.40.30.10">
    <property type="entry name" value="Translation factors"/>
    <property type="match status" value="2"/>
</dbReference>
<dbReference type="HAMAP" id="MF_00062">
    <property type="entry name" value="Sulf_adenylyltr_sub1"/>
    <property type="match status" value="1"/>
</dbReference>
<dbReference type="InterPro" id="IPR041757">
    <property type="entry name" value="CysN_GTP-bd"/>
</dbReference>
<dbReference type="InterPro" id="IPR044138">
    <property type="entry name" value="CysN_II"/>
</dbReference>
<dbReference type="InterPro" id="IPR044139">
    <property type="entry name" value="CysN_NoDQ_III"/>
</dbReference>
<dbReference type="InterPro" id="IPR004161">
    <property type="entry name" value="EFTu-like_2"/>
</dbReference>
<dbReference type="InterPro" id="IPR031157">
    <property type="entry name" value="G_TR_CS"/>
</dbReference>
<dbReference type="InterPro" id="IPR054696">
    <property type="entry name" value="GTP-eEF1A_C"/>
</dbReference>
<dbReference type="InterPro" id="IPR027417">
    <property type="entry name" value="P-loop_NTPase"/>
</dbReference>
<dbReference type="InterPro" id="IPR005225">
    <property type="entry name" value="Small_GTP-bd"/>
</dbReference>
<dbReference type="InterPro" id="IPR011779">
    <property type="entry name" value="SO4_adenylTrfase_lsu"/>
</dbReference>
<dbReference type="InterPro" id="IPR000795">
    <property type="entry name" value="T_Tr_GTP-bd_dom"/>
</dbReference>
<dbReference type="InterPro" id="IPR050100">
    <property type="entry name" value="TRAFAC_GTPase_members"/>
</dbReference>
<dbReference type="InterPro" id="IPR009000">
    <property type="entry name" value="Transl_B-barrel_sf"/>
</dbReference>
<dbReference type="InterPro" id="IPR009001">
    <property type="entry name" value="Transl_elong_EF1A/Init_IF2_C"/>
</dbReference>
<dbReference type="NCBIfam" id="TIGR02034">
    <property type="entry name" value="CysN"/>
    <property type="match status" value="1"/>
</dbReference>
<dbReference type="NCBIfam" id="NF003478">
    <property type="entry name" value="PRK05124.1"/>
    <property type="match status" value="1"/>
</dbReference>
<dbReference type="NCBIfam" id="TIGR00231">
    <property type="entry name" value="small_GTP"/>
    <property type="match status" value="1"/>
</dbReference>
<dbReference type="PANTHER" id="PTHR23115">
    <property type="entry name" value="TRANSLATION FACTOR"/>
    <property type="match status" value="1"/>
</dbReference>
<dbReference type="Pfam" id="PF22594">
    <property type="entry name" value="GTP-eEF1A_C"/>
    <property type="match status" value="1"/>
</dbReference>
<dbReference type="Pfam" id="PF00009">
    <property type="entry name" value="GTP_EFTU"/>
    <property type="match status" value="1"/>
</dbReference>
<dbReference type="Pfam" id="PF03144">
    <property type="entry name" value="GTP_EFTU_D2"/>
    <property type="match status" value="1"/>
</dbReference>
<dbReference type="PRINTS" id="PR00315">
    <property type="entry name" value="ELONGATNFCT"/>
</dbReference>
<dbReference type="SUPFAM" id="SSF50465">
    <property type="entry name" value="EF-Tu/eEF-1alpha/eIF2-gamma C-terminal domain"/>
    <property type="match status" value="1"/>
</dbReference>
<dbReference type="SUPFAM" id="SSF52540">
    <property type="entry name" value="P-loop containing nucleoside triphosphate hydrolases"/>
    <property type="match status" value="1"/>
</dbReference>
<dbReference type="SUPFAM" id="SSF50447">
    <property type="entry name" value="Translation proteins"/>
    <property type="match status" value="1"/>
</dbReference>
<dbReference type="PROSITE" id="PS00301">
    <property type="entry name" value="G_TR_1"/>
    <property type="match status" value="1"/>
</dbReference>
<dbReference type="PROSITE" id="PS51722">
    <property type="entry name" value="G_TR_2"/>
    <property type="match status" value="1"/>
</dbReference>
<protein>
    <recommendedName>
        <fullName evidence="2">Sulfate adenylyltransferase subunit 1</fullName>
        <ecNumber evidence="2">2.7.7.4</ecNumber>
    </recommendedName>
    <alternativeName>
        <fullName evidence="2">ATP-sulfurylase large subunit</fullName>
    </alternativeName>
    <alternativeName>
        <fullName evidence="2">Sulfate adenylate transferase</fullName>
        <shortName evidence="2">SAT</shortName>
    </alternativeName>
</protein>